<reference key="1">
    <citation type="journal article" date="2002" name="Nat. Biotechnol.">
        <title>Genome sequence of the dissimilatory metal ion-reducing bacterium Shewanella oneidensis.</title>
        <authorList>
            <person name="Heidelberg J.F."/>
            <person name="Paulsen I.T."/>
            <person name="Nelson K.E."/>
            <person name="Gaidos E.J."/>
            <person name="Nelson W.C."/>
            <person name="Read T.D."/>
            <person name="Eisen J.A."/>
            <person name="Seshadri R."/>
            <person name="Ward N.L."/>
            <person name="Methe B.A."/>
            <person name="Clayton R.A."/>
            <person name="Meyer T."/>
            <person name="Tsapin A."/>
            <person name="Scott J."/>
            <person name="Beanan M.J."/>
            <person name="Brinkac L.M."/>
            <person name="Daugherty S.C."/>
            <person name="DeBoy R.T."/>
            <person name="Dodson R.J."/>
            <person name="Durkin A.S."/>
            <person name="Haft D.H."/>
            <person name="Kolonay J.F."/>
            <person name="Madupu R."/>
            <person name="Peterson J.D."/>
            <person name="Umayam L.A."/>
            <person name="White O."/>
            <person name="Wolf A.M."/>
            <person name="Vamathevan J.J."/>
            <person name="Weidman J.F."/>
            <person name="Impraim M."/>
            <person name="Lee K."/>
            <person name="Berry K.J."/>
            <person name="Lee C."/>
            <person name="Mueller J."/>
            <person name="Khouri H.M."/>
            <person name="Gill J."/>
            <person name="Utterback T.R."/>
            <person name="McDonald L.A."/>
            <person name="Feldblyum T.V."/>
            <person name="Smith H.O."/>
            <person name="Venter J.C."/>
            <person name="Nealson K.H."/>
            <person name="Fraser C.M."/>
        </authorList>
    </citation>
    <scope>NUCLEOTIDE SEQUENCE [LARGE SCALE GENOMIC DNA]</scope>
    <source>
        <strain>ATCC 700550 / JCM 31522 / CIP 106686 / LMG 19005 / NCIMB 14063 / MR-1</strain>
    </source>
</reference>
<proteinExistence type="inferred from homology"/>
<accession>Q8EGH9</accession>
<comment type="catalytic activity">
    <reaction evidence="1">
        <text>(S)-2,3,4,5-tetrahydrodipicolinate + succinyl-CoA + H2O = (S)-2-succinylamino-6-oxoheptanedioate + CoA</text>
        <dbReference type="Rhea" id="RHEA:17325"/>
        <dbReference type="ChEBI" id="CHEBI:15377"/>
        <dbReference type="ChEBI" id="CHEBI:15685"/>
        <dbReference type="ChEBI" id="CHEBI:16845"/>
        <dbReference type="ChEBI" id="CHEBI:57287"/>
        <dbReference type="ChEBI" id="CHEBI:57292"/>
        <dbReference type="EC" id="2.3.1.117"/>
    </reaction>
</comment>
<comment type="pathway">
    <text evidence="1">Amino-acid biosynthesis; L-lysine biosynthesis via DAP pathway; LL-2,6-diaminopimelate from (S)-tetrahydrodipicolinate (succinylase route): step 1/3.</text>
</comment>
<comment type="subunit">
    <text evidence="1">Homotrimer.</text>
</comment>
<comment type="subcellular location">
    <subcellularLocation>
        <location evidence="1">Cytoplasm</location>
    </subcellularLocation>
</comment>
<comment type="similarity">
    <text evidence="1">Belongs to the transferase hexapeptide repeat family.</text>
</comment>
<sequence length="274" mass="29873">MEALRQRIEAAFEARTDITPSTVDERVRSDVQHVINMLDKGELRVAEKIDGLWHVHQWLKKAVLLSFRIFDNAVIDGAETKYFDKVPLKFAEYDEARFKAEAIRVVPSATVRKGSFIGKNTVLMPSYVNLGAYVDEGTMVDTWATVGSCAQIGKNVHLSGGVGIGGVLEPLQAGPTIIEDNCFIGARSEIVEGVVVEEGSVISMGVYIGQSTRIYDRETGEVHYGRVPAGSVVVSGNLPSACGKYSLYAAIIVKKVDAKTRSKVGINELLRIVD</sequence>
<gene>
    <name evidence="1" type="primary">dapD</name>
    <name type="ordered locus">SO_1625</name>
</gene>
<dbReference type="EC" id="2.3.1.117" evidence="1"/>
<dbReference type="EMBL" id="AE014299">
    <property type="protein sequence ID" value="AAN54680.1"/>
    <property type="molecule type" value="Genomic_DNA"/>
</dbReference>
<dbReference type="RefSeq" id="NP_717236.1">
    <property type="nucleotide sequence ID" value="NC_004347.2"/>
</dbReference>
<dbReference type="RefSeq" id="WP_011071781.1">
    <property type="nucleotide sequence ID" value="NC_004347.2"/>
</dbReference>
<dbReference type="SMR" id="Q8EGH9"/>
<dbReference type="STRING" id="211586.SO_1625"/>
<dbReference type="PaxDb" id="211586-SO_1625"/>
<dbReference type="KEGG" id="son:SO_1625"/>
<dbReference type="PATRIC" id="fig|1028802.3.peg.810"/>
<dbReference type="eggNOG" id="COG2171">
    <property type="taxonomic scope" value="Bacteria"/>
</dbReference>
<dbReference type="HOGENOM" id="CLU_050859_0_1_6"/>
<dbReference type="OrthoDB" id="9775362at2"/>
<dbReference type="PhylomeDB" id="Q8EGH9"/>
<dbReference type="BioCyc" id="SONE211586:G1GMP-1495-MONOMER"/>
<dbReference type="UniPathway" id="UPA00034">
    <property type="reaction ID" value="UER00019"/>
</dbReference>
<dbReference type="Proteomes" id="UP000008186">
    <property type="component" value="Chromosome"/>
</dbReference>
<dbReference type="GO" id="GO:0005737">
    <property type="term" value="C:cytoplasm"/>
    <property type="evidence" value="ECO:0007669"/>
    <property type="project" value="UniProtKB-SubCell"/>
</dbReference>
<dbReference type="GO" id="GO:0008666">
    <property type="term" value="F:2,3,4,5-tetrahydropyridine-2,6-dicarboxylate N-succinyltransferase activity"/>
    <property type="evidence" value="ECO:0007669"/>
    <property type="project" value="UniProtKB-UniRule"/>
</dbReference>
<dbReference type="GO" id="GO:0016779">
    <property type="term" value="F:nucleotidyltransferase activity"/>
    <property type="evidence" value="ECO:0000318"/>
    <property type="project" value="GO_Central"/>
</dbReference>
<dbReference type="GO" id="GO:0019877">
    <property type="term" value="P:diaminopimelate biosynthetic process"/>
    <property type="evidence" value="ECO:0000318"/>
    <property type="project" value="GO_Central"/>
</dbReference>
<dbReference type="GO" id="GO:0009085">
    <property type="term" value="P:lysine biosynthetic process"/>
    <property type="evidence" value="ECO:0000318"/>
    <property type="project" value="GO_Central"/>
</dbReference>
<dbReference type="GO" id="GO:0009089">
    <property type="term" value="P:lysine biosynthetic process via diaminopimelate"/>
    <property type="evidence" value="ECO:0007669"/>
    <property type="project" value="UniProtKB-UniRule"/>
</dbReference>
<dbReference type="CDD" id="cd03350">
    <property type="entry name" value="LbH_THP_succinylT"/>
    <property type="match status" value="1"/>
</dbReference>
<dbReference type="Gene3D" id="2.160.10.10">
    <property type="entry name" value="Hexapeptide repeat proteins"/>
    <property type="match status" value="1"/>
</dbReference>
<dbReference type="Gene3D" id="1.10.166.10">
    <property type="entry name" value="Tetrahydrodipicolinate-N-succinyltransferase, N-terminal domain"/>
    <property type="match status" value="1"/>
</dbReference>
<dbReference type="HAMAP" id="MF_00811">
    <property type="entry name" value="DapD"/>
    <property type="match status" value="1"/>
</dbReference>
<dbReference type="InterPro" id="IPR005664">
    <property type="entry name" value="DapD_Trfase_Hexpep_rpt_fam"/>
</dbReference>
<dbReference type="InterPro" id="IPR001451">
    <property type="entry name" value="Hexapep"/>
</dbReference>
<dbReference type="InterPro" id="IPR018357">
    <property type="entry name" value="Hexapep_transf_CS"/>
</dbReference>
<dbReference type="InterPro" id="IPR023180">
    <property type="entry name" value="THP_succinylTrfase_dom1"/>
</dbReference>
<dbReference type="InterPro" id="IPR037133">
    <property type="entry name" value="THP_succinylTrfase_N_sf"/>
</dbReference>
<dbReference type="InterPro" id="IPR011004">
    <property type="entry name" value="Trimer_LpxA-like_sf"/>
</dbReference>
<dbReference type="NCBIfam" id="TIGR00965">
    <property type="entry name" value="dapD"/>
    <property type="match status" value="1"/>
</dbReference>
<dbReference type="NCBIfam" id="NF008808">
    <property type="entry name" value="PRK11830.1"/>
    <property type="match status" value="1"/>
</dbReference>
<dbReference type="PANTHER" id="PTHR19136:SF52">
    <property type="entry name" value="2,3,4,5-TETRAHYDROPYRIDINE-2,6-DICARBOXYLATE N-SUCCINYLTRANSFERASE"/>
    <property type="match status" value="1"/>
</dbReference>
<dbReference type="PANTHER" id="PTHR19136">
    <property type="entry name" value="MOLYBDENUM COFACTOR GUANYLYLTRANSFERASE"/>
    <property type="match status" value="1"/>
</dbReference>
<dbReference type="Pfam" id="PF14602">
    <property type="entry name" value="Hexapep_2"/>
    <property type="match status" value="1"/>
</dbReference>
<dbReference type="Pfam" id="PF14805">
    <property type="entry name" value="THDPS_N_2"/>
    <property type="match status" value="1"/>
</dbReference>
<dbReference type="SUPFAM" id="SSF51161">
    <property type="entry name" value="Trimeric LpxA-like enzymes"/>
    <property type="match status" value="1"/>
</dbReference>
<dbReference type="PROSITE" id="PS00101">
    <property type="entry name" value="HEXAPEP_TRANSFERASES"/>
    <property type="match status" value="1"/>
</dbReference>
<name>DAPD_SHEON</name>
<keyword id="KW-0012">Acyltransferase</keyword>
<keyword id="KW-0028">Amino-acid biosynthesis</keyword>
<keyword id="KW-0963">Cytoplasm</keyword>
<keyword id="KW-0220">Diaminopimelate biosynthesis</keyword>
<keyword id="KW-0457">Lysine biosynthesis</keyword>
<keyword id="KW-1185">Reference proteome</keyword>
<keyword id="KW-0677">Repeat</keyword>
<keyword id="KW-0808">Transferase</keyword>
<feature type="chain" id="PRO_0000196970" description="2,3,4,5-tetrahydropyridine-2,6-dicarboxylate N-succinyltransferase">
    <location>
        <begin position="1"/>
        <end position="274"/>
    </location>
</feature>
<feature type="binding site" evidence="1">
    <location>
        <position position="104"/>
    </location>
    <ligand>
        <name>substrate</name>
    </ligand>
</feature>
<feature type="binding site" evidence="1">
    <location>
        <position position="141"/>
    </location>
    <ligand>
        <name>substrate</name>
    </ligand>
</feature>
<evidence type="ECO:0000255" key="1">
    <source>
        <dbReference type="HAMAP-Rule" id="MF_00811"/>
    </source>
</evidence>
<protein>
    <recommendedName>
        <fullName evidence="1">2,3,4,5-tetrahydropyridine-2,6-dicarboxylate N-succinyltransferase</fullName>
        <ecNumber evidence="1">2.3.1.117</ecNumber>
    </recommendedName>
    <alternativeName>
        <fullName evidence="1">Tetrahydrodipicolinate N-succinyltransferase</fullName>
        <shortName evidence="1">THDP succinyltransferase</shortName>
        <shortName evidence="1">THP succinyltransferase</shortName>
        <shortName evidence="1">Tetrahydropicolinate succinylase</shortName>
    </alternativeName>
</protein>
<organism>
    <name type="scientific">Shewanella oneidensis (strain ATCC 700550 / JCM 31522 / CIP 106686 / LMG 19005 / NCIMB 14063 / MR-1)</name>
    <dbReference type="NCBI Taxonomy" id="211586"/>
    <lineage>
        <taxon>Bacteria</taxon>
        <taxon>Pseudomonadati</taxon>
        <taxon>Pseudomonadota</taxon>
        <taxon>Gammaproteobacteria</taxon>
        <taxon>Alteromonadales</taxon>
        <taxon>Shewanellaceae</taxon>
        <taxon>Shewanella</taxon>
    </lineage>
</organism>